<gene>
    <name evidence="1" type="primary">era</name>
    <name type="ordered locus">SEQ_1633</name>
</gene>
<sequence length="298" mass="34144">MFKSGFVAILGRPNVGKSTFLNHVMGQKIAVMSDKAQTTRNKIMGIYTTETEQIVFIDTPGIHKPKTALGDFMVESAYSTLREVETVLFMVPADEKRGKGDDMIIERLKAARIPVILVINKIDKVHPDQLLEQIDDFRSQMDFKEIVPISALQGNNVETLVQLLKDNLEEGFQYFPEDQITDHPERFLVSEMVREKVLHLTQQEVPHSVAVVVDSMKRDEVTDKVHIRVTIMVERDSQKGIIIGKQGAMLKKIGKLARRDIELMLGDKVYLETWVKVKKNWRDKKLDLADFGYNQKEY</sequence>
<evidence type="ECO:0000255" key="1">
    <source>
        <dbReference type="HAMAP-Rule" id="MF_00367"/>
    </source>
</evidence>
<evidence type="ECO:0000255" key="2">
    <source>
        <dbReference type="PROSITE-ProRule" id="PRU01050"/>
    </source>
</evidence>
<organism>
    <name type="scientific">Streptococcus equi subsp. equi (strain 4047)</name>
    <dbReference type="NCBI Taxonomy" id="553482"/>
    <lineage>
        <taxon>Bacteria</taxon>
        <taxon>Bacillati</taxon>
        <taxon>Bacillota</taxon>
        <taxon>Bacilli</taxon>
        <taxon>Lactobacillales</taxon>
        <taxon>Streptococcaceae</taxon>
        <taxon>Streptococcus</taxon>
    </lineage>
</organism>
<accession>C0MBF0</accession>
<protein>
    <recommendedName>
        <fullName evidence="1">GTPase Era</fullName>
    </recommendedName>
</protein>
<proteinExistence type="inferred from homology"/>
<dbReference type="EMBL" id="FM204883">
    <property type="protein sequence ID" value="CAW94640.1"/>
    <property type="molecule type" value="Genomic_DNA"/>
</dbReference>
<dbReference type="RefSeq" id="WP_012679884.1">
    <property type="nucleotide sequence ID" value="NC_012471.1"/>
</dbReference>
<dbReference type="SMR" id="C0MBF0"/>
<dbReference type="KEGG" id="seu:SEQ_1633"/>
<dbReference type="HOGENOM" id="CLU_038009_1_0_9"/>
<dbReference type="OrthoDB" id="9805918at2"/>
<dbReference type="Proteomes" id="UP000001365">
    <property type="component" value="Chromosome"/>
</dbReference>
<dbReference type="GO" id="GO:0005829">
    <property type="term" value="C:cytosol"/>
    <property type="evidence" value="ECO:0007669"/>
    <property type="project" value="TreeGrafter"/>
</dbReference>
<dbReference type="GO" id="GO:0005886">
    <property type="term" value="C:plasma membrane"/>
    <property type="evidence" value="ECO:0007669"/>
    <property type="project" value="UniProtKB-SubCell"/>
</dbReference>
<dbReference type="GO" id="GO:0005525">
    <property type="term" value="F:GTP binding"/>
    <property type="evidence" value="ECO:0007669"/>
    <property type="project" value="UniProtKB-UniRule"/>
</dbReference>
<dbReference type="GO" id="GO:0003924">
    <property type="term" value="F:GTPase activity"/>
    <property type="evidence" value="ECO:0007669"/>
    <property type="project" value="UniProtKB-UniRule"/>
</dbReference>
<dbReference type="GO" id="GO:0043024">
    <property type="term" value="F:ribosomal small subunit binding"/>
    <property type="evidence" value="ECO:0007669"/>
    <property type="project" value="TreeGrafter"/>
</dbReference>
<dbReference type="GO" id="GO:0070181">
    <property type="term" value="F:small ribosomal subunit rRNA binding"/>
    <property type="evidence" value="ECO:0007669"/>
    <property type="project" value="UniProtKB-UniRule"/>
</dbReference>
<dbReference type="GO" id="GO:0000028">
    <property type="term" value="P:ribosomal small subunit assembly"/>
    <property type="evidence" value="ECO:0007669"/>
    <property type="project" value="TreeGrafter"/>
</dbReference>
<dbReference type="CDD" id="cd04163">
    <property type="entry name" value="Era"/>
    <property type="match status" value="1"/>
</dbReference>
<dbReference type="CDD" id="cd22534">
    <property type="entry name" value="KH-II_Era"/>
    <property type="match status" value="1"/>
</dbReference>
<dbReference type="FunFam" id="3.30.300.20:FF:000003">
    <property type="entry name" value="GTPase Era"/>
    <property type="match status" value="1"/>
</dbReference>
<dbReference type="FunFam" id="3.40.50.300:FF:000094">
    <property type="entry name" value="GTPase Era"/>
    <property type="match status" value="1"/>
</dbReference>
<dbReference type="Gene3D" id="3.30.300.20">
    <property type="match status" value="1"/>
</dbReference>
<dbReference type="Gene3D" id="3.40.50.300">
    <property type="entry name" value="P-loop containing nucleotide triphosphate hydrolases"/>
    <property type="match status" value="1"/>
</dbReference>
<dbReference type="HAMAP" id="MF_00367">
    <property type="entry name" value="GTPase_Era"/>
    <property type="match status" value="1"/>
</dbReference>
<dbReference type="InterPro" id="IPR030388">
    <property type="entry name" value="G_ERA_dom"/>
</dbReference>
<dbReference type="InterPro" id="IPR006073">
    <property type="entry name" value="GTP-bd"/>
</dbReference>
<dbReference type="InterPro" id="IPR005662">
    <property type="entry name" value="GTPase_Era-like"/>
</dbReference>
<dbReference type="InterPro" id="IPR015946">
    <property type="entry name" value="KH_dom-like_a/b"/>
</dbReference>
<dbReference type="InterPro" id="IPR004044">
    <property type="entry name" value="KH_dom_type_2"/>
</dbReference>
<dbReference type="InterPro" id="IPR009019">
    <property type="entry name" value="KH_sf_prok-type"/>
</dbReference>
<dbReference type="InterPro" id="IPR027417">
    <property type="entry name" value="P-loop_NTPase"/>
</dbReference>
<dbReference type="InterPro" id="IPR005225">
    <property type="entry name" value="Small_GTP-bd"/>
</dbReference>
<dbReference type="NCBIfam" id="TIGR00436">
    <property type="entry name" value="era"/>
    <property type="match status" value="1"/>
</dbReference>
<dbReference type="NCBIfam" id="NF000908">
    <property type="entry name" value="PRK00089.1"/>
    <property type="match status" value="1"/>
</dbReference>
<dbReference type="NCBIfam" id="TIGR00231">
    <property type="entry name" value="small_GTP"/>
    <property type="match status" value="1"/>
</dbReference>
<dbReference type="PANTHER" id="PTHR42698">
    <property type="entry name" value="GTPASE ERA"/>
    <property type="match status" value="1"/>
</dbReference>
<dbReference type="PANTHER" id="PTHR42698:SF1">
    <property type="entry name" value="GTPASE ERA, MITOCHONDRIAL"/>
    <property type="match status" value="1"/>
</dbReference>
<dbReference type="Pfam" id="PF07650">
    <property type="entry name" value="KH_2"/>
    <property type="match status" value="1"/>
</dbReference>
<dbReference type="Pfam" id="PF01926">
    <property type="entry name" value="MMR_HSR1"/>
    <property type="match status" value="1"/>
</dbReference>
<dbReference type="SUPFAM" id="SSF52540">
    <property type="entry name" value="P-loop containing nucleoside triphosphate hydrolases"/>
    <property type="match status" value="1"/>
</dbReference>
<dbReference type="SUPFAM" id="SSF54814">
    <property type="entry name" value="Prokaryotic type KH domain (KH-domain type II)"/>
    <property type="match status" value="1"/>
</dbReference>
<dbReference type="PROSITE" id="PS51713">
    <property type="entry name" value="G_ERA"/>
    <property type="match status" value="1"/>
</dbReference>
<dbReference type="PROSITE" id="PS50823">
    <property type="entry name" value="KH_TYPE_2"/>
    <property type="match status" value="1"/>
</dbReference>
<name>ERA_STRE4</name>
<keyword id="KW-1003">Cell membrane</keyword>
<keyword id="KW-0963">Cytoplasm</keyword>
<keyword id="KW-0342">GTP-binding</keyword>
<keyword id="KW-0472">Membrane</keyword>
<keyword id="KW-0547">Nucleotide-binding</keyword>
<keyword id="KW-0690">Ribosome biogenesis</keyword>
<keyword id="KW-0694">RNA-binding</keyword>
<keyword id="KW-0699">rRNA-binding</keyword>
<reference key="1">
    <citation type="journal article" date="2009" name="PLoS Pathog.">
        <title>Genomic evidence for the evolution of Streptococcus equi: host restriction, increased virulence, and genetic exchange with human pathogens.</title>
        <authorList>
            <person name="Holden M.T.G."/>
            <person name="Heather Z."/>
            <person name="Paillot R."/>
            <person name="Steward K.F."/>
            <person name="Webb K."/>
            <person name="Ainslie F."/>
            <person name="Jourdan T."/>
            <person name="Bason N.C."/>
            <person name="Holroyd N.E."/>
            <person name="Mungall K."/>
            <person name="Quail M.A."/>
            <person name="Sanders M."/>
            <person name="Simmonds M."/>
            <person name="Willey D."/>
            <person name="Brooks K."/>
            <person name="Aanensen D.M."/>
            <person name="Spratt B.G."/>
            <person name="Jolley K.A."/>
            <person name="Maiden M.C.J."/>
            <person name="Kehoe M."/>
            <person name="Chanter N."/>
            <person name="Bentley S.D."/>
            <person name="Robinson C."/>
            <person name="Maskell D.J."/>
            <person name="Parkhill J."/>
            <person name="Waller A.S."/>
        </authorList>
    </citation>
    <scope>NUCLEOTIDE SEQUENCE [LARGE SCALE GENOMIC DNA]</scope>
    <source>
        <strain>4047</strain>
    </source>
</reference>
<comment type="function">
    <text evidence="1">An essential GTPase that binds both GDP and GTP, with rapid nucleotide exchange. Plays a role in 16S rRNA processing and 30S ribosomal subunit biogenesis and possibly also in cell cycle regulation and energy metabolism.</text>
</comment>
<comment type="subunit">
    <text evidence="1">Monomer.</text>
</comment>
<comment type="subcellular location">
    <subcellularLocation>
        <location>Cytoplasm</location>
    </subcellularLocation>
    <subcellularLocation>
        <location evidence="1">Cell membrane</location>
        <topology evidence="1">Peripheral membrane protein</topology>
    </subcellularLocation>
</comment>
<comment type="similarity">
    <text evidence="1 2">Belongs to the TRAFAC class TrmE-Era-EngA-EngB-Septin-like GTPase superfamily. Era GTPase family.</text>
</comment>
<feature type="chain" id="PRO_1000189971" description="GTPase Era">
    <location>
        <begin position="1"/>
        <end position="298"/>
    </location>
</feature>
<feature type="domain" description="Era-type G" evidence="2">
    <location>
        <begin position="3"/>
        <end position="170"/>
    </location>
</feature>
<feature type="domain" description="KH type-2" evidence="1">
    <location>
        <begin position="201"/>
        <end position="279"/>
    </location>
</feature>
<feature type="region of interest" description="G1" evidence="2">
    <location>
        <begin position="11"/>
        <end position="18"/>
    </location>
</feature>
<feature type="region of interest" description="G2" evidence="2">
    <location>
        <begin position="37"/>
        <end position="41"/>
    </location>
</feature>
<feature type="region of interest" description="G3" evidence="2">
    <location>
        <begin position="58"/>
        <end position="61"/>
    </location>
</feature>
<feature type="region of interest" description="G4" evidence="2">
    <location>
        <begin position="120"/>
        <end position="123"/>
    </location>
</feature>
<feature type="region of interest" description="G5" evidence="2">
    <location>
        <begin position="149"/>
        <end position="151"/>
    </location>
</feature>
<feature type="binding site" evidence="1">
    <location>
        <begin position="11"/>
        <end position="18"/>
    </location>
    <ligand>
        <name>GTP</name>
        <dbReference type="ChEBI" id="CHEBI:37565"/>
    </ligand>
</feature>
<feature type="binding site" evidence="1">
    <location>
        <begin position="58"/>
        <end position="62"/>
    </location>
    <ligand>
        <name>GTP</name>
        <dbReference type="ChEBI" id="CHEBI:37565"/>
    </ligand>
</feature>
<feature type="binding site" evidence="1">
    <location>
        <begin position="120"/>
        <end position="123"/>
    </location>
    <ligand>
        <name>GTP</name>
        <dbReference type="ChEBI" id="CHEBI:37565"/>
    </ligand>
</feature>